<feature type="chain" id="PRO_0000172780" description="Uronate isomerase">
    <location>
        <begin position="1"/>
        <end position="470"/>
    </location>
</feature>
<accession>Q6A5D0</accession>
<evidence type="ECO:0000255" key="1">
    <source>
        <dbReference type="HAMAP-Rule" id="MF_00675"/>
    </source>
</evidence>
<keyword id="KW-0413">Isomerase</keyword>
<protein>
    <recommendedName>
        <fullName evidence="1">Uronate isomerase</fullName>
        <ecNumber evidence="1">5.3.1.12</ecNumber>
    </recommendedName>
    <alternativeName>
        <fullName evidence="1">Glucuronate isomerase</fullName>
    </alternativeName>
    <alternativeName>
        <fullName evidence="1">Uronic isomerase</fullName>
    </alternativeName>
</protein>
<sequence>MSTPTLTLSEDRLLPRESSALAAAREIYRSTKGLPIISPHGHVPVSWIADDMAFSDPTSLLITPDHYVNRLLHANGVDLEDLGVGRKTMSEEDNRRAFRILCEHWRDFAGTAMRYWLVDQLIGIFGITERPSPENADRIYDTIAERIAQPDFLPRALMDSFDIAFIATTDDPCDDLDGHARLAADETFTRRVAPTFRPDKYLEPAAGGWTGLLARLSEVSGCDATTLDGFTEAMEDRRAYFRQHGAVSSDHSHRDLGTIILDHDRAASIFDASVAGRATVEEMALLRRHLFTDQARMASEDGLTMTVHPAVHRNHDTAAFHRFGADIGSDVPVTLEVVDSLHPLLDKFGNTDLKLVVFTIDETLYSREIAPLSGWYRSLYIGVPWWFIDAPESVMRFKHAVTEMAGFSRVSGMIDDTRAFCSIPARHDMSRRLDAAHLAELVVLGRLDLDEAVEIAHRLVVEQPTQVFGL</sequence>
<reference key="1">
    <citation type="journal article" date="2004" name="Science">
        <title>The complete genome sequence of Propionibacterium acnes, a commensal of human skin.</title>
        <authorList>
            <person name="Brueggemann H."/>
            <person name="Henne A."/>
            <person name="Hoster F."/>
            <person name="Liesegang H."/>
            <person name="Wiezer A."/>
            <person name="Strittmatter A."/>
            <person name="Hujer S."/>
            <person name="Duerre P."/>
            <person name="Gottschalk G."/>
        </authorList>
    </citation>
    <scope>NUCLEOTIDE SEQUENCE [LARGE SCALE GENOMIC DNA]</scope>
    <source>
        <strain>DSM 16379 / KPA171202</strain>
    </source>
</reference>
<dbReference type="EC" id="5.3.1.12" evidence="1"/>
<dbReference type="EMBL" id="AE017283">
    <property type="protein sequence ID" value="AAT84033.1"/>
    <property type="molecule type" value="Genomic_DNA"/>
</dbReference>
<dbReference type="RefSeq" id="WP_002530879.1">
    <property type="nucleotide sequence ID" value="NZ_CP025935.1"/>
</dbReference>
<dbReference type="SMR" id="Q6A5D0"/>
<dbReference type="EnsemblBacteria" id="AAT84033">
    <property type="protein sequence ID" value="AAT84033"/>
    <property type="gene ID" value="PPA2329"/>
</dbReference>
<dbReference type="KEGG" id="pac:PPA2329"/>
<dbReference type="PATRIC" id="fig|267747.3.peg.2400"/>
<dbReference type="eggNOG" id="COG1904">
    <property type="taxonomic scope" value="Bacteria"/>
</dbReference>
<dbReference type="HOGENOM" id="CLU_044465_0_0_11"/>
<dbReference type="UniPathway" id="UPA00246"/>
<dbReference type="Proteomes" id="UP000000603">
    <property type="component" value="Chromosome"/>
</dbReference>
<dbReference type="GO" id="GO:0008880">
    <property type="term" value="F:glucuronate isomerase activity"/>
    <property type="evidence" value="ECO:0007669"/>
    <property type="project" value="UniProtKB-UniRule"/>
</dbReference>
<dbReference type="GO" id="GO:0019698">
    <property type="term" value="P:D-galacturonate catabolic process"/>
    <property type="evidence" value="ECO:0007669"/>
    <property type="project" value="TreeGrafter"/>
</dbReference>
<dbReference type="GO" id="GO:0042840">
    <property type="term" value="P:D-glucuronate catabolic process"/>
    <property type="evidence" value="ECO:0007669"/>
    <property type="project" value="TreeGrafter"/>
</dbReference>
<dbReference type="Gene3D" id="3.20.20.140">
    <property type="entry name" value="Metal-dependent hydrolases"/>
    <property type="match status" value="1"/>
</dbReference>
<dbReference type="Gene3D" id="1.10.2020.10">
    <property type="entry name" value="uronate isomerase, domain 2, chain A"/>
    <property type="match status" value="1"/>
</dbReference>
<dbReference type="HAMAP" id="MF_00675">
    <property type="entry name" value="UxaC"/>
    <property type="match status" value="1"/>
</dbReference>
<dbReference type="InterPro" id="IPR032466">
    <property type="entry name" value="Metal_Hydrolase"/>
</dbReference>
<dbReference type="InterPro" id="IPR003766">
    <property type="entry name" value="Uronate_isomerase"/>
</dbReference>
<dbReference type="NCBIfam" id="NF002794">
    <property type="entry name" value="PRK02925.1"/>
    <property type="match status" value="1"/>
</dbReference>
<dbReference type="PANTHER" id="PTHR30068">
    <property type="entry name" value="URONATE ISOMERASE"/>
    <property type="match status" value="1"/>
</dbReference>
<dbReference type="PANTHER" id="PTHR30068:SF4">
    <property type="entry name" value="URONATE ISOMERASE"/>
    <property type="match status" value="1"/>
</dbReference>
<dbReference type="Pfam" id="PF02614">
    <property type="entry name" value="UxaC"/>
    <property type="match status" value="1"/>
</dbReference>
<dbReference type="SUPFAM" id="SSF51556">
    <property type="entry name" value="Metallo-dependent hydrolases"/>
    <property type="match status" value="1"/>
</dbReference>
<organism>
    <name type="scientific">Cutibacterium acnes (strain DSM 16379 / KPA171202)</name>
    <name type="common">Propionibacterium acnes</name>
    <dbReference type="NCBI Taxonomy" id="267747"/>
    <lineage>
        <taxon>Bacteria</taxon>
        <taxon>Bacillati</taxon>
        <taxon>Actinomycetota</taxon>
        <taxon>Actinomycetes</taxon>
        <taxon>Propionibacteriales</taxon>
        <taxon>Propionibacteriaceae</taxon>
        <taxon>Cutibacterium</taxon>
    </lineage>
</organism>
<proteinExistence type="inferred from homology"/>
<comment type="catalytic activity">
    <reaction evidence="1">
        <text>D-glucuronate = D-fructuronate</text>
        <dbReference type="Rhea" id="RHEA:13049"/>
        <dbReference type="ChEBI" id="CHEBI:58720"/>
        <dbReference type="ChEBI" id="CHEBI:59863"/>
        <dbReference type="EC" id="5.3.1.12"/>
    </reaction>
</comment>
<comment type="catalytic activity">
    <reaction evidence="1">
        <text>aldehydo-D-galacturonate = keto-D-tagaturonate</text>
        <dbReference type="Rhea" id="RHEA:27702"/>
        <dbReference type="ChEBI" id="CHEBI:12952"/>
        <dbReference type="ChEBI" id="CHEBI:17886"/>
        <dbReference type="EC" id="5.3.1.12"/>
    </reaction>
</comment>
<comment type="pathway">
    <text evidence="1">Carbohydrate metabolism; pentose and glucuronate interconversion.</text>
</comment>
<comment type="similarity">
    <text evidence="1">Belongs to the metallo-dependent hydrolases superfamily. Uronate isomerase family.</text>
</comment>
<gene>
    <name evidence="1" type="primary">uxaC</name>
    <name type="ordered locus">PPA2329</name>
</gene>
<name>UXAC_CUTAK</name>